<proteinExistence type="evidence at protein level"/>
<gene>
    <name type="primary">Tmem256</name>
</gene>
<protein>
    <recommendedName>
        <fullName>Transmembrane protein 256</fullName>
    </recommendedName>
</protein>
<dbReference type="EMBL" id="AL603707">
    <property type="status" value="NOT_ANNOTATED_CDS"/>
    <property type="molecule type" value="Genomic_DNA"/>
</dbReference>
<dbReference type="EMBL" id="BC117077">
    <property type="protein sequence ID" value="AAI17078.1"/>
    <property type="molecule type" value="mRNA"/>
</dbReference>
<dbReference type="EMBL" id="BC117079">
    <property type="protein sequence ID" value="AAI17080.1"/>
    <property type="molecule type" value="mRNA"/>
</dbReference>
<dbReference type="CCDS" id="CCDS24915.1"/>
<dbReference type="RefSeq" id="NP_081258.1">
    <property type="nucleotide sequence ID" value="NM_026982.2"/>
</dbReference>
<dbReference type="FunCoup" id="Q5F285">
    <property type="interactions" value="424"/>
</dbReference>
<dbReference type="STRING" id="10090.ENSMUSP00000091608"/>
<dbReference type="iPTMnet" id="Q5F285"/>
<dbReference type="PhosphoSitePlus" id="Q5F285"/>
<dbReference type="jPOST" id="Q5F285"/>
<dbReference type="PaxDb" id="10090-ENSMUSP00000091608"/>
<dbReference type="PeptideAtlas" id="Q5F285"/>
<dbReference type="ProteomicsDB" id="262828"/>
<dbReference type="Pumba" id="Q5F285"/>
<dbReference type="Antibodypedia" id="76715">
    <property type="antibodies" value="26 antibodies from 8 providers"/>
</dbReference>
<dbReference type="Ensembl" id="ENSMUST00000094065.5">
    <property type="protein sequence ID" value="ENSMUSP00000091608.5"/>
    <property type="gene ID" value="ENSMUSG00000070394.11"/>
</dbReference>
<dbReference type="GeneID" id="69186"/>
<dbReference type="KEGG" id="mmu:69186"/>
<dbReference type="UCSC" id="uc007jry.1">
    <property type="organism name" value="mouse"/>
</dbReference>
<dbReference type="AGR" id="MGI:1916436"/>
<dbReference type="CTD" id="254863"/>
<dbReference type="MGI" id="MGI:1916436">
    <property type="gene designation" value="Tmem256"/>
</dbReference>
<dbReference type="VEuPathDB" id="HostDB:ENSMUSG00000070394"/>
<dbReference type="eggNOG" id="KOG3472">
    <property type="taxonomic scope" value="Eukaryota"/>
</dbReference>
<dbReference type="GeneTree" id="ENSGT00390000000334"/>
<dbReference type="HOGENOM" id="CLU_096548_1_2_1"/>
<dbReference type="InParanoid" id="Q5F285"/>
<dbReference type="OMA" id="YHYSITG"/>
<dbReference type="OrthoDB" id="269173at2759"/>
<dbReference type="PhylomeDB" id="Q5F285"/>
<dbReference type="TreeFam" id="TF300271"/>
<dbReference type="BioGRID-ORCS" id="69186">
    <property type="hits" value="2 hits in 79 CRISPR screens"/>
</dbReference>
<dbReference type="ChiTaRS" id="Tmem256">
    <property type="organism name" value="mouse"/>
</dbReference>
<dbReference type="PRO" id="PR:Q5F285"/>
<dbReference type="Proteomes" id="UP000000589">
    <property type="component" value="Chromosome 11"/>
</dbReference>
<dbReference type="RNAct" id="Q5F285">
    <property type="molecule type" value="protein"/>
</dbReference>
<dbReference type="Bgee" id="ENSMUSG00000070394">
    <property type="expression patterns" value="Expressed in interventricular septum and 228 other cell types or tissues"/>
</dbReference>
<dbReference type="ExpressionAtlas" id="Q5F285">
    <property type="expression patterns" value="baseline and differential"/>
</dbReference>
<dbReference type="GO" id="GO:0005743">
    <property type="term" value="C:mitochondrial inner membrane"/>
    <property type="evidence" value="ECO:0007005"/>
    <property type="project" value="MGI"/>
</dbReference>
<dbReference type="InterPro" id="IPR006696">
    <property type="entry name" value="DUF423"/>
</dbReference>
<dbReference type="PANTHER" id="PTHR43461">
    <property type="entry name" value="TRANSMEMBRANE PROTEIN 256"/>
    <property type="match status" value="1"/>
</dbReference>
<dbReference type="PANTHER" id="PTHR43461:SF1">
    <property type="entry name" value="TRANSMEMBRANE PROTEIN 256"/>
    <property type="match status" value="1"/>
</dbReference>
<dbReference type="Pfam" id="PF04241">
    <property type="entry name" value="DUF423"/>
    <property type="match status" value="1"/>
</dbReference>
<keyword id="KW-0007">Acetylation</keyword>
<keyword id="KW-0472">Membrane</keyword>
<keyword id="KW-1185">Reference proteome</keyword>
<keyword id="KW-0732">Signal</keyword>
<keyword id="KW-0812">Transmembrane</keyword>
<keyword id="KW-1133">Transmembrane helix</keyword>
<name>TM256_MOUSE</name>
<organism>
    <name type="scientific">Mus musculus</name>
    <name type="common">Mouse</name>
    <dbReference type="NCBI Taxonomy" id="10090"/>
    <lineage>
        <taxon>Eukaryota</taxon>
        <taxon>Metazoa</taxon>
        <taxon>Chordata</taxon>
        <taxon>Craniata</taxon>
        <taxon>Vertebrata</taxon>
        <taxon>Euteleostomi</taxon>
        <taxon>Mammalia</taxon>
        <taxon>Eutheria</taxon>
        <taxon>Euarchontoglires</taxon>
        <taxon>Glires</taxon>
        <taxon>Rodentia</taxon>
        <taxon>Myomorpha</taxon>
        <taxon>Muroidea</taxon>
        <taxon>Muridae</taxon>
        <taxon>Murinae</taxon>
        <taxon>Mus</taxon>
        <taxon>Mus</taxon>
    </lineage>
</organism>
<accession>Q5F285</accession>
<feature type="signal peptide" evidence="1">
    <location>
        <begin position="1"/>
        <end position="29"/>
    </location>
</feature>
<feature type="chain" id="PRO_0000287171" description="Transmembrane protein 256">
    <location>
        <begin position="30"/>
        <end position="113"/>
    </location>
</feature>
<feature type="topological domain" description="Extracellular" evidence="1">
    <location>
        <begin position="30"/>
        <end position="63"/>
    </location>
</feature>
<feature type="transmembrane region" description="Helical" evidence="1">
    <location>
        <begin position="64"/>
        <end position="84"/>
    </location>
</feature>
<feature type="topological domain" description="Cytoplasmic" evidence="1">
    <location>
        <begin position="85"/>
        <end position="92"/>
    </location>
</feature>
<feature type="transmembrane region" description="Helical" evidence="1">
    <location>
        <begin position="93"/>
        <end position="113"/>
    </location>
</feature>
<feature type="modified residue" description="N6-acetyllysine" evidence="3">
    <location>
        <position position="43"/>
    </location>
</feature>
<evidence type="ECO:0000255" key="1"/>
<evidence type="ECO:0000305" key="2"/>
<evidence type="ECO:0007744" key="3">
    <source>
    </source>
</evidence>
<sequence>MAGVGAAFRRLGALSGAGALGLASYGAHGAQFPDAYGKELFDKANKHHFLHSLALLGVPSCRKPVWAGLLLASGTTLFCTSFYYQALSGDTSIQTLGPVGGSLLILGWLALAF</sequence>
<reference key="1">
    <citation type="journal article" date="2009" name="PLoS Biol.">
        <title>Lineage-specific biology revealed by a finished genome assembly of the mouse.</title>
        <authorList>
            <person name="Church D.M."/>
            <person name="Goodstadt L."/>
            <person name="Hillier L.W."/>
            <person name="Zody M.C."/>
            <person name="Goldstein S."/>
            <person name="She X."/>
            <person name="Bult C.J."/>
            <person name="Agarwala R."/>
            <person name="Cherry J.L."/>
            <person name="DiCuccio M."/>
            <person name="Hlavina W."/>
            <person name="Kapustin Y."/>
            <person name="Meric P."/>
            <person name="Maglott D."/>
            <person name="Birtle Z."/>
            <person name="Marques A.C."/>
            <person name="Graves T."/>
            <person name="Zhou S."/>
            <person name="Teague B."/>
            <person name="Potamousis K."/>
            <person name="Churas C."/>
            <person name="Place M."/>
            <person name="Herschleb J."/>
            <person name="Runnheim R."/>
            <person name="Forrest D."/>
            <person name="Amos-Landgraf J."/>
            <person name="Schwartz D.C."/>
            <person name="Cheng Z."/>
            <person name="Lindblad-Toh K."/>
            <person name="Eichler E.E."/>
            <person name="Ponting C.P."/>
        </authorList>
    </citation>
    <scope>NUCLEOTIDE SEQUENCE [LARGE SCALE GENOMIC DNA]</scope>
    <source>
        <strain>C57BL/6J</strain>
    </source>
</reference>
<reference key="2">
    <citation type="journal article" date="2004" name="Genome Res.">
        <title>The status, quality, and expansion of the NIH full-length cDNA project: the Mammalian Gene Collection (MGC).</title>
        <authorList>
            <consortium name="The MGC Project Team"/>
        </authorList>
    </citation>
    <scope>NUCLEOTIDE SEQUENCE [LARGE SCALE MRNA]</scope>
    <source>
        <tissue>Brain</tissue>
    </source>
</reference>
<reference key="3">
    <citation type="journal article" date="2010" name="Cell">
        <title>A tissue-specific atlas of mouse protein phosphorylation and expression.</title>
        <authorList>
            <person name="Huttlin E.L."/>
            <person name="Jedrychowski M.P."/>
            <person name="Elias J.E."/>
            <person name="Goswami T."/>
            <person name="Rad R."/>
            <person name="Beausoleil S.A."/>
            <person name="Villen J."/>
            <person name="Haas W."/>
            <person name="Sowa M.E."/>
            <person name="Gygi S.P."/>
        </authorList>
    </citation>
    <scope>IDENTIFICATION BY MASS SPECTROMETRY [LARGE SCALE ANALYSIS]</scope>
    <source>
        <tissue>Brain</tissue>
        <tissue>Brown adipose tissue</tissue>
        <tissue>Heart</tissue>
        <tissue>Kidney</tissue>
        <tissue>Liver</tissue>
        <tissue>Lung</tissue>
        <tissue>Spleen</tissue>
        <tissue>Testis</tissue>
    </source>
</reference>
<reference key="4">
    <citation type="journal article" date="2013" name="Proc. Natl. Acad. Sci. U.S.A.">
        <title>Label-free quantitative proteomics of the lysine acetylome in mitochondria identifies substrates of SIRT3 in metabolic pathways.</title>
        <authorList>
            <person name="Rardin M.J."/>
            <person name="Newman J.C."/>
            <person name="Held J.M."/>
            <person name="Cusack M.P."/>
            <person name="Sorensen D.J."/>
            <person name="Li B."/>
            <person name="Schilling B."/>
            <person name="Mooney S.D."/>
            <person name="Kahn C.R."/>
            <person name="Verdin E."/>
            <person name="Gibson B.W."/>
        </authorList>
    </citation>
    <scope>ACETYLATION [LARGE SCALE ANALYSIS] AT LYS-43</scope>
    <scope>IDENTIFICATION BY MASS SPECTROMETRY [LARGE SCALE ANALYSIS]</scope>
    <source>
        <tissue>Liver</tissue>
    </source>
</reference>
<comment type="subcellular location">
    <subcellularLocation>
        <location evidence="2">Membrane</location>
        <topology evidence="2">Multi-pass membrane protein</topology>
    </subcellularLocation>
</comment>
<comment type="similarity">
    <text evidence="2">Belongs to the TMEM256 family.</text>
</comment>